<feature type="chain" id="PRO_0000442025" description="O-methyltransferase fsr2">
    <location>
        <begin position="1"/>
        <end position="387"/>
    </location>
</feature>
<feature type="active site" description="Proton acceptor" evidence="1">
    <location>
        <position position="280"/>
    </location>
</feature>
<feature type="binding site" evidence="1">
    <location>
        <position position="231"/>
    </location>
    <ligand>
        <name>S-adenosyl-L-methionine</name>
        <dbReference type="ChEBI" id="CHEBI:59789"/>
    </ligand>
</feature>
<sequence length="387" mass="43020">MDKADRDAVIEHATQVKRLVHDPHSFLTELVAQQQQYHCIAWLCHFNILSNIPQPPESIAYSDVATKAQVPLSKLQSVARMAMTTGLLSETKDGKLSHNTLSAQFITNVHMKTQLLHIVNQTVPLMTGLIQATWKWGETSATNETAYNIIHGTELSFFEHLKTRPDLNEGFQAYMKSRAVSHTGSNVEHLLNAFDWKALGQAQVVDIGGSSGSTSIMLATAFPLLNLVIEDLPEPIENAKARLSELPSDIKSRIEIMAYDFFTPQPVKNADVYLLRTILHDWPDADAIKIIQGIVAAMGPSSRLLIMDMVLPKPGSGSVTFEAALRQKDLTMIQCFNAQEREVEEWKALLTKADPRLKIQAIERPAGSELSVIEAMLDESPEQAAWF</sequence>
<dbReference type="EC" id="2.1.1.-" evidence="1"/>
<dbReference type="EMBL" id="HE613440">
    <property type="protein sequence ID" value="CCE67071.1"/>
    <property type="molecule type" value="Genomic_DNA"/>
</dbReference>
<dbReference type="EMBL" id="HF679024">
    <property type="protein sequence ID" value="CCT64761.1"/>
    <property type="molecule type" value="Genomic_DNA"/>
</dbReference>
<dbReference type="SMR" id="S0DQQ0"/>
<dbReference type="STRING" id="1279085.S0DQQ0"/>
<dbReference type="VEuPathDB" id="FungiDB:FFUJ_03985"/>
<dbReference type="Proteomes" id="UP000016800">
    <property type="component" value="Chromosome 2"/>
</dbReference>
<dbReference type="GO" id="GO:0008171">
    <property type="term" value="F:O-methyltransferase activity"/>
    <property type="evidence" value="ECO:0007669"/>
    <property type="project" value="InterPro"/>
</dbReference>
<dbReference type="GO" id="GO:0032259">
    <property type="term" value="P:methylation"/>
    <property type="evidence" value="ECO:0007669"/>
    <property type="project" value="UniProtKB-KW"/>
</dbReference>
<dbReference type="GO" id="GO:0044550">
    <property type="term" value="P:secondary metabolite biosynthetic process"/>
    <property type="evidence" value="ECO:0007669"/>
    <property type="project" value="UniProtKB-ARBA"/>
</dbReference>
<dbReference type="Gene3D" id="3.40.50.150">
    <property type="entry name" value="Vaccinia Virus protein VP39"/>
    <property type="match status" value="1"/>
</dbReference>
<dbReference type="Gene3D" id="1.10.10.10">
    <property type="entry name" value="Winged helix-like DNA-binding domain superfamily/Winged helix DNA-binding domain"/>
    <property type="match status" value="1"/>
</dbReference>
<dbReference type="InterPro" id="IPR016461">
    <property type="entry name" value="COMT-like"/>
</dbReference>
<dbReference type="InterPro" id="IPR001077">
    <property type="entry name" value="O_MeTrfase_dom"/>
</dbReference>
<dbReference type="InterPro" id="IPR029063">
    <property type="entry name" value="SAM-dependent_MTases_sf"/>
</dbReference>
<dbReference type="InterPro" id="IPR036388">
    <property type="entry name" value="WH-like_DNA-bd_sf"/>
</dbReference>
<dbReference type="InterPro" id="IPR036390">
    <property type="entry name" value="WH_DNA-bd_sf"/>
</dbReference>
<dbReference type="PANTHER" id="PTHR43712:SF19">
    <property type="entry name" value="DUAL O-METHYLTRANSFERASE_FAD-DEPENDENT MONOOXYGENASE ELCB"/>
    <property type="match status" value="1"/>
</dbReference>
<dbReference type="PANTHER" id="PTHR43712">
    <property type="entry name" value="PUTATIVE (AFU_ORTHOLOGUE AFUA_4G14580)-RELATED"/>
    <property type="match status" value="1"/>
</dbReference>
<dbReference type="Pfam" id="PF00891">
    <property type="entry name" value="Methyltransf_2"/>
    <property type="match status" value="1"/>
</dbReference>
<dbReference type="SUPFAM" id="SSF53335">
    <property type="entry name" value="S-adenosyl-L-methionine-dependent methyltransferases"/>
    <property type="match status" value="1"/>
</dbReference>
<dbReference type="SUPFAM" id="SSF46785">
    <property type="entry name" value="Winged helix' DNA-binding domain"/>
    <property type="match status" value="1"/>
</dbReference>
<dbReference type="PROSITE" id="PS51683">
    <property type="entry name" value="SAM_OMT_II"/>
    <property type="match status" value="1"/>
</dbReference>
<gene>
    <name evidence="4" type="primary">FSR2</name>
    <name type="ORF">FFUJ_03985</name>
</gene>
<name>FSR2_GIBF5</name>
<comment type="function">
    <text evidence="2 3">O-methyltransferase; part of the gene cluster that mediates the biosynthesis of fusarubins, highly pigmented naphthoquinones responsible for the coloration of the fruiting bodies (PubMed:22492438, PubMed:23825955). The non-reducing polyketide synthase FSR1 is responsible for the condensation of seven acetyl-CoA units to yield a haptaketide (PubMed:22492438). After rings A and B are formed by aldol-type cyclization, the PKS-derived product is released as 6-O-demethylfusarubinaldehyde (PubMed:22492438). Then, two hydroxyl groups at C-5 and C-10 are incorporated by FSR3, and simultaneously hydroxyl groups at C-6 and C-8 are methylated by FSR2 (PubMed:22492438). The aldehyde is, on the one hand, reduced by FSR3 to 8-O-methylfusarubin alcohol, which equilibrates mainly with 8-O-methylfusarubin and only small amounts of 8-O-methylnectriafurone (PubMed:22492438). On the other hand, the aldehyde can be oxidized to form 8-O-methylfusarubinic acid, a reaction driven by FSR3 equilibrating with 8-O-methylfusarubinlactone, finally resulting in 8-O-methylanhydrofusarubinlactol after a further reduction step and loss of water (PubMed:22492438). 8-O-Methylfusarubinic acid can also undergo decarboxylation, resulting in 8-O-methyl-13-hydroxynorjavanicin after another hydroxylation step at C-13 (PubMed:22492438). Both steps are most likely also accomplished by FSR3 (PubMed:22492438). No enzymatic function has been determined so far for either FSR4 and FSR5 (PubMed:22492438). Their deletion does not alter the product spectrum, but the possibility that they catalyze specific enzymatic steps during perithecium development cannot be ruled out (PubMed:22492438). FSR4 might possess a regulatory function in the biosynthesis of fusarubins (PubMed:22492438).</text>
</comment>
<comment type="pathway">
    <text evidence="2">Polyketide biosynthesis.</text>
</comment>
<comment type="induction">
    <text evidence="2">Expression is repressed under acidic conditions, while the expression is induced under alkaline conditions (PubMed:22492438). Expression is induced in presence of sodium nitrate, and repressed by glutamine (PubMed:22492438).</text>
</comment>
<comment type="disruption phenotype">
    <text evidence="2">Leads to an alteration in the product spectrum, with an accumulation of 6-O-demethyl-10-deoxyfusarubin and 6-O-demethylfusarubinaldehyde (PubMed:22492438).</text>
</comment>
<comment type="similarity">
    <text evidence="5">Belongs to the class I-like SAM-binding methyltransferase superfamily. Cation-independent O-methyltransferase family. COMT subfamily.</text>
</comment>
<evidence type="ECO:0000255" key="1">
    <source>
        <dbReference type="PROSITE-ProRule" id="PRU01020"/>
    </source>
</evidence>
<evidence type="ECO:0000269" key="2">
    <source>
    </source>
</evidence>
<evidence type="ECO:0000269" key="3">
    <source>
    </source>
</evidence>
<evidence type="ECO:0000303" key="4">
    <source>
    </source>
</evidence>
<evidence type="ECO:0000305" key="5"/>
<reference key="1">
    <citation type="journal article" date="2012" name="Appl. Environ. Microbiol.">
        <title>Biosynthesis of fusarubins accounts for pigmentation of Fusarium fujikuroi perithecia.</title>
        <authorList>
            <person name="Studt L."/>
            <person name="Wiemann P."/>
            <person name="Kleigrewe K."/>
            <person name="Humpf H.U."/>
            <person name="Tudzynski B."/>
        </authorList>
    </citation>
    <scope>NUCLEOTIDE SEQUENCE [GENOMIC DNA]</scope>
    <scope>FUNCTION</scope>
    <scope>INDUCTION</scope>
    <scope>DISRUPTION PHENOTYPE</scope>
    <scope>PATHWAY</scope>
    <source>
        <strain>CBS 195.34 / IMI 58289 / NRRL A-6831</strain>
    </source>
</reference>
<reference key="2">
    <citation type="journal article" date="2013" name="PLoS Pathog.">
        <title>Deciphering the cryptic genome: genome-wide analyses of the rice pathogen Fusarium fujikuroi reveal complex regulation of secondary metabolism and novel metabolites.</title>
        <authorList>
            <person name="Wiemann P."/>
            <person name="Sieber C.M.K."/>
            <person name="von Bargen K.W."/>
            <person name="Studt L."/>
            <person name="Niehaus E.-M."/>
            <person name="Espino J.J."/>
            <person name="Huss K."/>
            <person name="Michielse C.B."/>
            <person name="Albermann S."/>
            <person name="Wagner D."/>
            <person name="Bergner S.V."/>
            <person name="Connolly L.R."/>
            <person name="Fischer A."/>
            <person name="Reuter G."/>
            <person name="Kleigrewe K."/>
            <person name="Bald T."/>
            <person name="Wingfield B.D."/>
            <person name="Ophir R."/>
            <person name="Freeman S."/>
            <person name="Hippler M."/>
            <person name="Smith K.M."/>
            <person name="Brown D.W."/>
            <person name="Proctor R.H."/>
            <person name="Muensterkoetter M."/>
            <person name="Freitag M."/>
            <person name="Humpf H.-U."/>
            <person name="Gueldener U."/>
            <person name="Tudzynski B."/>
        </authorList>
    </citation>
    <scope>NUCLEOTIDE SEQUENCE [LARGE SCALE GENOMIC DNA]</scope>
    <scope>FUNCTION</scope>
    <source>
        <strain>CBS 195.34 / IMI 58289 / NRRL A-6831</strain>
    </source>
</reference>
<organism>
    <name type="scientific">Gibberella fujikuroi (strain CBS 195.34 / IMI 58289 / NRRL A-6831)</name>
    <name type="common">Bakanae and foot rot disease fungus</name>
    <name type="synonym">Fusarium fujikuroi</name>
    <dbReference type="NCBI Taxonomy" id="1279085"/>
    <lineage>
        <taxon>Eukaryota</taxon>
        <taxon>Fungi</taxon>
        <taxon>Dikarya</taxon>
        <taxon>Ascomycota</taxon>
        <taxon>Pezizomycotina</taxon>
        <taxon>Sordariomycetes</taxon>
        <taxon>Hypocreomycetidae</taxon>
        <taxon>Hypocreales</taxon>
        <taxon>Nectriaceae</taxon>
        <taxon>Fusarium</taxon>
        <taxon>Fusarium fujikuroi species complex</taxon>
    </lineage>
</organism>
<proteinExistence type="evidence at transcript level"/>
<protein>
    <recommendedName>
        <fullName evidence="4">O-methyltransferase fsr2</fullName>
        <ecNumber evidence="1">2.1.1.-</ecNumber>
    </recommendedName>
    <alternativeName>
        <fullName evidence="4">Fusarubin biosynthesis cluster protein 2</fullName>
    </alternativeName>
</protein>
<keyword id="KW-0489">Methyltransferase</keyword>
<keyword id="KW-1185">Reference proteome</keyword>
<keyword id="KW-0949">S-adenosyl-L-methionine</keyword>
<keyword id="KW-0808">Transferase</keyword>
<accession>S0DQQ0</accession>
<accession>G8C420</accession>